<gene>
    <name type="primary">Rps6ka1</name>
    <name type="synonym">Mapkapk1a</name>
    <name type="synonym">Rsk1</name>
</gene>
<organism>
    <name type="scientific">Mus musculus</name>
    <name type="common">Mouse</name>
    <dbReference type="NCBI Taxonomy" id="10090"/>
    <lineage>
        <taxon>Eukaryota</taxon>
        <taxon>Metazoa</taxon>
        <taxon>Chordata</taxon>
        <taxon>Craniata</taxon>
        <taxon>Vertebrata</taxon>
        <taxon>Euteleostomi</taxon>
        <taxon>Mammalia</taxon>
        <taxon>Eutheria</taxon>
        <taxon>Euarchontoglires</taxon>
        <taxon>Glires</taxon>
        <taxon>Rodentia</taxon>
        <taxon>Myomorpha</taxon>
        <taxon>Muroidea</taxon>
        <taxon>Muridae</taxon>
        <taxon>Murinae</taxon>
        <taxon>Mus</taxon>
        <taxon>Mus</taxon>
    </lineage>
</organism>
<comment type="function">
    <text evidence="2 5">Serine/threonine-protein kinase that acts downstream of ERK (MAPK1/ERK2 and MAPK3/ERK1) signaling and mediates mitogenic and stress-induced activation of the transcription factors CREB1, ETV1/ER81 and NR4A1/NUR77, regulates translation through RPS6 and EIF4B phosphorylation, and mediates cellular proliferation, survival, and differentiation by modulating mTOR signaling and repressing pro-apoptotic function of BAD and DAPK1 (By similarity). In fibroblast, is required for EGF-stimulated phosphorylation of CREB1, which results in the subsequent transcriptional activation of several immediate-early genes (By similarity). In response to mitogenic stimulation (EGF and PMA), phosphorylates and activates NR4A1/NUR77 and ETV1/ER81 transcription factors and the cofactor CREBBP (By similarity). Upon insulin-derived signal, acts indirectly on the transcription regulation of several genes by phosphorylating GSK3B at 'Ser-9' and inhibiting its activity (By similarity). Phosphorylates RPS6 in response to serum or EGF via an mTOR-independent mechanism and promotes translation initiation by facilitating assembly of the pre-initiation complex (By similarity). In response to insulin, phosphorylates EIF4B, enhancing EIF4B affinity for the EIF3 complex and stimulating cap-dependent translation (By similarity). Is involved in the mTOR nutrient-sensing pathway by directly phosphorylating TSC2 at 'Ser-1798', which potently inhibits TSC2 ability to suppress mTOR signaling, and mediates phosphorylation of RPTOR, which regulates mTORC1 activity and may promote rapamycin-sensitive signaling independently of the PI3K/AKT pathway (By similarity). Also involved in feedback regulation of mTORC1 and mTORC2 by phosphorylating DEPTOR (By similarity). Mediates cell survival by phosphorylating the pro-apoptotic proteins BAD and DAPK1 and suppressing their pro-apoptotic function (By similarity). Promotes the survival of hepatic stellate cells by phosphorylating CEBPB in response to the hepatotoxin carbon tetrachloride (CCl4) (PubMed:10635333). Mediates induction of hepatocyte prolifration by TGFA through phosphorylation of CEBPB (By similarity). Is involved in cell cycle regulation by phosphorylating the CDK inhibitor CDKN1B, which promotes CDKN1B association with 14-3-3 proteins and prevents its translocation to the nucleus and inhibition of G1 progression (By similarity). Phosphorylates EPHA2 at 'Ser-897', the RPS6KA-EPHA2 signaling pathway controls cell migration (By similarity). In response to mTORC1 activation, phosphorylates EIF4B at 'Ser-406' and 'Ser-422' which stimulates bicarbonate cotransporter SLC4A7 mRNA translation, increasing SLC4A7 protein abundance and function (By similarity).</text>
</comment>
<comment type="catalytic activity">
    <reaction>
        <text>L-seryl-[protein] + ATP = O-phospho-L-seryl-[protein] + ADP + H(+)</text>
        <dbReference type="Rhea" id="RHEA:17989"/>
        <dbReference type="Rhea" id="RHEA-COMP:9863"/>
        <dbReference type="Rhea" id="RHEA-COMP:11604"/>
        <dbReference type="ChEBI" id="CHEBI:15378"/>
        <dbReference type="ChEBI" id="CHEBI:29999"/>
        <dbReference type="ChEBI" id="CHEBI:30616"/>
        <dbReference type="ChEBI" id="CHEBI:83421"/>
        <dbReference type="ChEBI" id="CHEBI:456216"/>
        <dbReference type="EC" id="2.7.11.1"/>
    </reaction>
</comment>
<comment type="catalytic activity">
    <reaction>
        <text>L-threonyl-[protein] + ATP = O-phospho-L-threonyl-[protein] + ADP + H(+)</text>
        <dbReference type="Rhea" id="RHEA:46608"/>
        <dbReference type="Rhea" id="RHEA-COMP:11060"/>
        <dbReference type="Rhea" id="RHEA-COMP:11605"/>
        <dbReference type="ChEBI" id="CHEBI:15378"/>
        <dbReference type="ChEBI" id="CHEBI:30013"/>
        <dbReference type="ChEBI" id="CHEBI:30616"/>
        <dbReference type="ChEBI" id="CHEBI:61977"/>
        <dbReference type="ChEBI" id="CHEBI:456216"/>
        <dbReference type="EC" id="2.7.11.1"/>
    </reaction>
</comment>
<comment type="cofactor">
    <cofactor evidence="1">
        <name>Mg(2+)</name>
        <dbReference type="ChEBI" id="CHEBI:18420"/>
    </cofactor>
</comment>
<comment type="activity regulation">
    <text evidence="1">Upon extracellular signal or mitogen stimulation, phosphorylated at Thr-562 in the C-terminal kinase domain (CTKD) by MAPK1/ERK2 and MAPK3/ERK1. The activated CTKD then autophosphorylates Ser-369, allowing binding of PDPK1, which in turn phosphorylates Ser-221 in the N-terminal kinase domain (NTDK) leading to the full activation of the protein and subsequent phosphorylation of the substrates by the NTKD (By similarity).</text>
</comment>
<comment type="subunit">
    <text evidence="1">Forms a complex with either MAPK1/ERK2 or MAPK3/ERK1 in quiescent cells. Transiently dissociates following mitogenic stimulation. Interacts with ETV1/ER81 and FGFR1 (By similarity).</text>
</comment>
<comment type="subcellular location">
    <subcellularLocation>
        <location evidence="1">Nucleus</location>
    </subcellularLocation>
    <subcellularLocation>
        <location evidence="1">Cytoplasm</location>
    </subcellularLocation>
</comment>
<comment type="tissue specificity">
    <text>Intestine, thymus, and lung.</text>
</comment>
<comment type="PTM">
    <text evidence="1">Activated by phosphorylation at Ser-221 by PDPK1. Autophosphorylated on Ser-369, as part of the activation process. May be phosphorylated at Thr-348 and Ser-352 by MAPK1/ERK2 and MAPK3/ERK1 (By similarity).</text>
</comment>
<comment type="PTM">
    <text evidence="1">N-terminal myristoylation results in an activated kinase in the absence of added growth factors.</text>
</comment>
<comment type="similarity">
    <text evidence="6">Belongs to the protein kinase superfamily. AGC Ser/Thr protein kinase family. S6 kinase subfamily.</text>
</comment>
<accession>P18653</accession>
<name>KS6A1_MOUSE</name>
<evidence type="ECO:0000250" key="1"/>
<evidence type="ECO:0000250" key="2">
    <source>
        <dbReference type="UniProtKB" id="Q15418"/>
    </source>
</evidence>
<evidence type="ECO:0000255" key="3">
    <source>
        <dbReference type="PROSITE-ProRule" id="PRU00159"/>
    </source>
</evidence>
<evidence type="ECO:0000255" key="4">
    <source>
        <dbReference type="PROSITE-ProRule" id="PRU00618"/>
    </source>
</evidence>
<evidence type="ECO:0000269" key="5">
    <source>
    </source>
</evidence>
<evidence type="ECO:0000305" key="6"/>
<evidence type="ECO:0007744" key="7">
    <source>
    </source>
</evidence>
<evidence type="ECO:0007744" key="8">
    <source>
    </source>
</evidence>
<evidence type="ECO:0007744" key="9">
    <source>
    </source>
</evidence>
<proteinExistence type="evidence at protein level"/>
<sequence length="724" mass="81595">MPLAQLKEPWPLMELVPLDPENGQTSGEEAGLQPSKDEAILKEISITHHVKAGSEKADPSQFELLKVLGQGSFGKVFLVRKVTRPDSGHLYAMKVLKKATLKVRDRVRTKMERDILADVNHPFVVKLHYAFQTEGKLYLILDFLRGGDLFTRLSKEVMFTEEDVKFYLAELALGLDHLHSLGIIYRDLKPENILLDEEGHIKLTDFGLSKEAIDHEKKAYSFCGTVEYMAPEVVNRQGHTHSADWWSYGVLMGKDRKETMTLILKAKLGMPQFLSTEAQSLLRALFKRNPANRLGSGPDGAEEIKRHIFYSTIDWNKLYRREIKPPFKPAVAQPDDTFYFDTEFTSRTPRDSPGIPPSAGAHQLFRGFSFVATGLMEDDGKPRTTQAPLHSVVQQLHGKNLVFSDGYVVKETIGVGSYSVCKRCVHKATNMEYAVKVIDKSKRDPSEEIEILLRYGQHPNIITLKDVYDDGKHVYLVTELMRGGELLDKILRQKFFSEREASFVLHTISKTVEYLHSQGVVHRDLKPSNILYVDESGNPECLRICDFGFAKQLRAENGLLMTPCYTANFVAPEVLKRQGYDEGCDIWSLGILLYTMLAGYTPFANGPSDTPEEILTRIGSGKFTLSGGNWNTVSETAKDLVSKMLHVDPHQRLTAKQVLQHPWITQKDKLPQSQLSHQDLQLVKGAMAATYSALNSSKPTPQLKPIESSILAQRRVRKLPSTTL</sequence>
<keyword id="KW-0067">ATP-binding</keyword>
<keyword id="KW-0963">Cytoplasm</keyword>
<keyword id="KW-0418">Kinase</keyword>
<keyword id="KW-0547">Nucleotide-binding</keyword>
<keyword id="KW-0539">Nucleus</keyword>
<keyword id="KW-0597">Phosphoprotein</keyword>
<keyword id="KW-1185">Reference proteome</keyword>
<keyword id="KW-0677">Repeat</keyword>
<keyword id="KW-0723">Serine/threonine-protein kinase</keyword>
<keyword id="KW-0808">Transferase</keyword>
<protein>
    <recommendedName>
        <fullName>Ribosomal protein S6 kinase alpha-1</fullName>
        <shortName>S6K-alpha-1</shortName>
        <ecNumber>2.7.11.1</ecNumber>
    </recommendedName>
    <alternativeName>
        <fullName>90 kDa ribosomal protein S6 kinase 1</fullName>
        <shortName>p90-RSK 1</shortName>
        <shortName>p90RSK1</shortName>
        <shortName>p90S6K</shortName>
    </alternativeName>
    <alternativeName>
        <fullName>MAP kinase-activated protein kinase 1a</fullName>
        <shortName>MAPK-activated protein kinase 1a</shortName>
        <shortName>MAPKAP kinase 1a</shortName>
        <shortName>MAPKAPK-1a</shortName>
    </alternativeName>
    <alternativeName>
        <fullName>Ribosomal S6 kinase 1</fullName>
        <shortName>RSK-1</shortName>
    </alternativeName>
</protein>
<reference key="1">
    <citation type="journal article" date="1989" name="Mol. Cell. Biol.">
        <title>Sequence and expression of chicken and mouse rsk: homologs of Xenopus laevis ribosomal S6 kinase.</title>
        <authorList>
            <person name="Alcorta D.A."/>
            <person name="Crews C.M."/>
            <person name="Sweet L.J."/>
            <person name="Bankston L."/>
            <person name="Jones S.W."/>
            <person name="Erikson R.L."/>
        </authorList>
    </citation>
    <scope>NUCLEOTIDE SEQUENCE [MRNA]</scope>
</reference>
<reference key="2">
    <citation type="journal article" date="1999" name="Mol. Cell">
        <title>Phosphorylation of rat serine 105 or mouse threonine 217 in C/EBP beta is required for hepatocyte proliferation induced by TGF alpha.</title>
        <authorList>
            <person name="Buck M."/>
            <person name="Poli V."/>
            <person name="van der Geer P."/>
            <person name="Chojkier M."/>
            <person name="Hunter T."/>
        </authorList>
    </citation>
    <scope>FUNCTION</scope>
</reference>
<reference key="3">
    <citation type="journal article" date="2007" name="Proc. Natl. Acad. Sci. U.S.A.">
        <title>Large-scale phosphorylation analysis of mouse liver.</title>
        <authorList>
            <person name="Villen J."/>
            <person name="Beausoleil S.A."/>
            <person name="Gerber S.A."/>
            <person name="Gygi S.P."/>
        </authorList>
    </citation>
    <scope>PHOSPHORYLATION [LARGE SCALE ANALYSIS] AT SER-369</scope>
    <scope>IDENTIFICATION BY MASS SPECTROMETRY [LARGE SCALE ANALYSIS]</scope>
    <source>
        <tissue>Liver</tissue>
    </source>
</reference>
<reference key="4">
    <citation type="journal article" date="2009" name="Immunity">
        <title>The phagosomal proteome in interferon-gamma-activated macrophages.</title>
        <authorList>
            <person name="Trost M."/>
            <person name="English L."/>
            <person name="Lemieux S."/>
            <person name="Courcelles M."/>
            <person name="Desjardins M."/>
            <person name="Thibault P."/>
        </authorList>
    </citation>
    <scope>PHOSPHORYLATION [LARGE SCALE ANALYSIS] AT SER-369</scope>
    <scope>IDENTIFICATION BY MASS SPECTROMETRY [LARGE SCALE ANALYSIS]</scope>
</reference>
<reference key="5">
    <citation type="journal article" date="2010" name="Cell">
        <title>A tissue-specific atlas of mouse protein phosphorylation and expression.</title>
        <authorList>
            <person name="Huttlin E.L."/>
            <person name="Jedrychowski M.P."/>
            <person name="Elias J.E."/>
            <person name="Goswami T."/>
            <person name="Rad R."/>
            <person name="Beausoleil S.A."/>
            <person name="Villen J."/>
            <person name="Haas W."/>
            <person name="Sowa M.E."/>
            <person name="Gygi S.P."/>
        </authorList>
    </citation>
    <scope>PHOSPHORYLATION [LARGE SCALE ANALYSIS] AT SER-369</scope>
    <scope>IDENTIFICATION BY MASS SPECTROMETRY [LARGE SCALE ANALYSIS]</scope>
    <source>
        <tissue>Brain</tissue>
        <tissue>Brown adipose tissue</tissue>
        <tissue>Kidney</tissue>
        <tissue>Liver</tissue>
        <tissue>Lung</tissue>
        <tissue>Spleen</tissue>
        <tissue>Testis</tissue>
    </source>
</reference>
<feature type="chain" id="PRO_0000086199" description="Ribosomal protein S6 kinase alpha-1">
    <location>
        <begin position="1"/>
        <end position="724"/>
    </location>
</feature>
<feature type="domain" description="Protein kinase 1" evidence="3">
    <location>
        <begin position="62"/>
        <end position="310"/>
    </location>
</feature>
<feature type="domain" description="AGC-kinase C-terminal" evidence="4">
    <location>
        <begin position="311"/>
        <end position="380"/>
    </location>
</feature>
<feature type="domain" description="Protein kinase 2" evidence="3">
    <location>
        <begin position="407"/>
        <end position="664"/>
    </location>
</feature>
<feature type="active site" description="Proton acceptor" evidence="1">
    <location>
        <position position="187"/>
    </location>
</feature>
<feature type="active site" description="Proton acceptor" evidence="1">
    <location>
        <position position="524"/>
    </location>
</feature>
<feature type="binding site" evidence="3">
    <location>
        <begin position="68"/>
        <end position="76"/>
    </location>
    <ligand>
        <name>ATP</name>
        <dbReference type="ChEBI" id="CHEBI:30616"/>
    </ligand>
</feature>
<feature type="binding site" evidence="3">
    <location>
        <position position="94"/>
    </location>
    <ligand>
        <name>ATP</name>
        <dbReference type="ChEBI" id="CHEBI:30616"/>
    </ligand>
</feature>
<feature type="binding site" evidence="3">
    <location>
        <begin position="413"/>
        <end position="421"/>
    </location>
    <ligand>
        <name>ATP</name>
        <dbReference type="ChEBI" id="CHEBI:30616"/>
    </ligand>
</feature>
<feature type="binding site" evidence="3">
    <location>
        <position position="436"/>
    </location>
    <ligand>
        <name>ATP</name>
        <dbReference type="ChEBI" id="CHEBI:30616"/>
    </ligand>
</feature>
<feature type="modified residue" description="Phosphoserine" evidence="2">
    <location>
        <position position="54"/>
    </location>
</feature>
<feature type="modified residue" description="Phosphoserine; by PDPK1" evidence="2">
    <location>
        <position position="221"/>
    </location>
</feature>
<feature type="modified residue" description="Phosphoserine" evidence="2">
    <location>
        <position position="296"/>
    </location>
</feature>
<feature type="modified residue" description="Phosphothreonine" evidence="2">
    <location>
        <position position="348"/>
    </location>
</feature>
<feature type="modified residue" description="Phosphoserine" evidence="2">
    <location>
        <position position="352"/>
    </location>
</feature>
<feature type="modified residue" description="Phosphoserine" evidence="2">
    <location>
        <position position="358"/>
    </location>
</feature>
<feature type="modified residue" description="Phosphoserine" evidence="7 8 9">
    <location>
        <position position="369"/>
    </location>
</feature>
<feature type="modified residue" description="Phosphothreonine" evidence="2">
    <location>
        <position position="562"/>
    </location>
</feature>
<feature type="modified residue" description="Phosphoserine" evidence="2">
    <location>
        <position position="721"/>
    </location>
</feature>
<dbReference type="EC" id="2.7.11.1"/>
<dbReference type="EMBL" id="M28489">
    <property type="protein sequence ID" value="AAA50300.1"/>
    <property type="molecule type" value="mRNA"/>
</dbReference>
<dbReference type="CCDS" id="CCDS71488.1"/>
<dbReference type="PIR" id="B32571">
    <property type="entry name" value="B32571"/>
</dbReference>
<dbReference type="RefSeq" id="NP_001272434.1">
    <property type="nucleotide sequence ID" value="NM_001285505.1"/>
</dbReference>
<dbReference type="SMR" id="P18653"/>
<dbReference type="BioGRID" id="203014">
    <property type="interactions" value="23"/>
</dbReference>
<dbReference type="FunCoup" id="P18653">
    <property type="interactions" value="2684"/>
</dbReference>
<dbReference type="IntAct" id="P18653">
    <property type="interactions" value="8"/>
</dbReference>
<dbReference type="MINT" id="P18653"/>
<dbReference type="STRING" id="10090.ENSMUSP00000101514"/>
<dbReference type="ChEMBL" id="CHEMBL3309057"/>
<dbReference type="GlyGen" id="P18653">
    <property type="glycosylation" value="2 sites, 1 O-linked glycan (2 sites)"/>
</dbReference>
<dbReference type="iPTMnet" id="P18653"/>
<dbReference type="PhosphoSitePlus" id="P18653"/>
<dbReference type="SwissPalm" id="P18653"/>
<dbReference type="jPOST" id="P18653"/>
<dbReference type="PaxDb" id="10090-ENSMUSP00000101514"/>
<dbReference type="ProteomicsDB" id="264874"/>
<dbReference type="Antibodypedia" id="2073">
    <property type="antibodies" value="1653 antibodies from 46 providers"/>
</dbReference>
<dbReference type="DNASU" id="20111"/>
<dbReference type="Ensembl" id="ENSMUST00000003741.16">
    <property type="protein sequence ID" value="ENSMUSP00000003741.10"/>
    <property type="gene ID" value="ENSMUSG00000003644.18"/>
</dbReference>
<dbReference type="GeneID" id="20111"/>
<dbReference type="KEGG" id="mmu:20111"/>
<dbReference type="UCSC" id="uc012dmp.3">
    <property type="organism name" value="mouse"/>
</dbReference>
<dbReference type="AGR" id="MGI:104558"/>
<dbReference type="CTD" id="6195"/>
<dbReference type="MGI" id="MGI:104558">
    <property type="gene designation" value="Rps6ka1"/>
</dbReference>
<dbReference type="VEuPathDB" id="HostDB:ENSMUSG00000003644"/>
<dbReference type="eggNOG" id="KOG0603">
    <property type="taxonomic scope" value="Eukaryota"/>
</dbReference>
<dbReference type="GeneTree" id="ENSGT00940000159314"/>
<dbReference type="InParanoid" id="P18653"/>
<dbReference type="BRENDA" id="2.7.11.1">
    <property type="organism ID" value="3474"/>
</dbReference>
<dbReference type="Reactome" id="R-MMU-198753">
    <property type="pathway name" value="ERK/MAPK targets"/>
</dbReference>
<dbReference type="Reactome" id="R-MMU-199920">
    <property type="pathway name" value="CREB phosphorylation"/>
</dbReference>
<dbReference type="Reactome" id="R-MMU-2559582">
    <property type="pathway name" value="Senescence-Associated Secretory Phenotype (SASP)"/>
</dbReference>
<dbReference type="Reactome" id="R-MMU-442742">
    <property type="pathway name" value="CREB1 phosphorylation through NMDA receptor-mediated activation of RAS signaling"/>
</dbReference>
<dbReference type="Reactome" id="R-MMU-444257">
    <property type="pathway name" value="RSK activation"/>
</dbReference>
<dbReference type="Reactome" id="R-MMU-881907">
    <property type="pathway name" value="Gastrin-CREB signalling pathway via PKC and MAPK"/>
</dbReference>
<dbReference type="Reactome" id="R-MMU-9856649">
    <property type="pathway name" value="Transcriptional and post-translational regulation of MITF-M expression and activity"/>
</dbReference>
<dbReference type="BioGRID-ORCS" id="20111">
    <property type="hits" value="7 hits in 81 CRISPR screens"/>
</dbReference>
<dbReference type="ChiTaRS" id="Rps6ka1">
    <property type="organism name" value="mouse"/>
</dbReference>
<dbReference type="PRO" id="PR:P18653"/>
<dbReference type="Proteomes" id="UP000000589">
    <property type="component" value="Chromosome 4"/>
</dbReference>
<dbReference type="RNAct" id="P18653">
    <property type="molecule type" value="protein"/>
</dbReference>
<dbReference type="Bgee" id="ENSMUSG00000003644">
    <property type="expression patterns" value="Expressed in granulocyte and 225 other cell types or tissues"/>
</dbReference>
<dbReference type="ExpressionAtlas" id="P18653">
    <property type="expression patterns" value="baseline and differential"/>
</dbReference>
<dbReference type="GO" id="GO:0005737">
    <property type="term" value="C:cytoplasm"/>
    <property type="evidence" value="ECO:0007669"/>
    <property type="project" value="UniProtKB-SubCell"/>
</dbReference>
<dbReference type="GO" id="GO:0005634">
    <property type="term" value="C:nucleus"/>
    <property type="evidence" value="ECO:0007669"/>
    <property type="project" value="UniProtKB-SubCell"/>
</dbReference>
<dbReference type="GO" id="GO:0005819">
    <property type="term" value="C:spindle"/>
    <property type="evidence" value="ECO:0000314"/>
    <property type="project" value="MGI"/>
</dbReference>
<dbReference type="GO" id="GO:0045202">
    <property type="term" value="C:synapse"/>
    <property type="evidence" value="ECO:0000314"/>
    <property type="project" value="SynGO"/>
</dbReference>
<dbReference type="GO" id="GO:0005524">
    <property type="term" value="F:ATP binding"/>
    <property type="evidence" value="ECO:0007669"/>
    <property type="project" value="UniProtKB-KW"/>
</dbReference>
<dbReference type="GO" id="GO:0140297">
    <property type="term" value="F:DNA-binding transcription factor binding"/>
    <property type="evidence" value="ECO:0000353"/>
    <property type="project" value="UniProtKB"/>
</dbReference>
<dbReference type="GO" id="GO:0016301">
    <property type="term" value="F:kinase activity"/>
    <property type="evidence" value="ECO:0000314"/>
    <property type="project" value="UniProtKB"/>
</dbReference>
<dbReference type="GO" id="GO:0000287">
    <property type="term" value="F:magnesium ion binding"/>
    <property type="evidence" value="ECO:0007669"/>
    <property type="project" value="InterPro"/>
</dbReference>
<dbReference type="GO" id="GO:0106310">
    <property type="term" value="F:protein serine kinase activity"/>
    <property type="evidence" value="ECO:0007669"/>
    <property type="project" value="RHEA"/>
</dbReference>
<dbReference type="GO" id="GO:0004674">
    <property type="term" value="F:protein serine/threonine kinase activity"/>
    <property type="evidence" value="ECO:0000250"/>
    <property type="project" value="UniProtKB"/>
</dbReference>
<dbReference type="GO" id="GO:0004712">
    <property type="term" value="F:protein serine/threonine/tyrosine kinase activity"/>
    <property type="evidence" value="ECO:0000266"/>
    <property type="project" value="MGI"/>
</dbReference>
<dbReference type="GO" id="GO:0072574">
    <property type="term" value="P:hepatocyte proliferation"/>
    <property type="evidence" value="ECO:0000314"/>
    <property type="project" value="UniProtKB"/>
</dbReference>
<dbReference type="GO" id="GO:0035556">
    <property type="term" value="P:intracellular signal transduction"/>
    <property type="evidence" value="ECO:0007669"/>
    <property type="project" value="InterPro"/>
</dbReference>
<dbReference type="GO" id="GO:0043066">
    <property type="term" value="P:negative regulation of apoptotic process"/>
    <property type="evidence" value="ECO:0000250"/>
    <property type="project" value="UniProtKB"/>
</dbReference>
<dbReference type="GO" id="GO:2000491">
    <property type="term" value="P:positive regulation of hepatic stellate cell activation"/>
    <property type="evidence" value="ECO:0000250"/>
    <property type="project" value="UniProtKB"/>
</dbReference>
<dbReference type="CDD" id="cd14175">
    <property type="entry name" value="STKc_RSK1_C"/>
    <property type="match status" value="1"/>
</dbReference>
<dbReference type="CDD" id="cd05582">
    <property type="entry name" value="STKc_RSK_N"/>
    <property type="match status" value="1"/>
</dbReference>
<dbReference type="FunFam" id="1.10.510.10:FF:000010">
    <property type="entry name" value="Ribosomal protein S6 kinase"/>
    <property type="match status" value="1"/>
</dbReference>
<dbReference type="FunFam" id="1.10.510.10:FF:000041">
    <property type="entry name" value="Ribosomal protein S6 kinase"/>
    <property type="match status" value="1"/>
</dbReference>
<dbReference type="FunFam" id="3.30.200.20:FF:000013">
    <property type="entry name" value="Ribosomal protein S6 kinase"/>
    <property type="match status" value="1"/>
</dbReference>
<dbReference type="FunFam" id="3.30.200.20:FF:000121">
    <property type="entry name" value="Ribosomal protein S6 kinase"/>
    <property type="match status" value="1"/>
</dbReference>
<dbReference type="Gene3D" id="3.30.200.20">
    <property type="entry name" value="Phosphorylase Kinase, domain 1"/>
    <property type="match status" value="2"/>
</dbReference>
<dbReference type="Gene3D" id="1.10.510.10">
    <property type="entry name" value="Transferase(Phosphotransferase) domain 1"/>
    <property type="match status" value="2"/>
</dbReference>
<dbReference type="InterPro" id="IPR000961">
    <property type="entry name" value="AGC-kinase_C"/>
</dbReference>
<dbReference type="InterPro" id="IPR011009">
    <property type="entry name" value="Kinase-like_dom_sf"/>
</dbReference>
<dbReference type="InterPro" id="IPR017892">
    <property type="entry name" value="Pkinase_C"/>
</dbReference>
<dbReference type="InterPro" id="IPR000719">
    <property type="entry name" value="Prot_kinase_dom"/>
</dbReference>
<dbReference type="InterPro" id="IPR017441">
    <property type="entry name" value="Protein_kinase_ATP_BS"/>
</dbReference>
<dbReference type="InterPro" id="IPR016239">
    <property type="entry name" value="Ribosomal_S6_kinase_II"/>
</dbReference>
<dbReference type="InterPro" id="IPR041906">
    <property type="entry name" value="RSK_N"/>
</dbReference>
<dbReference type="InterPro" id="IPR008271">
    <property type="entry name" value="Ser/Thr_kinase_AS"/>
</dbReference>
<dbReference type="PANTHER" id="PTHR24351">
    <property type="entry name" value="RIBOSOMAL PROTEIN S6 KINASE"/>
    <property type="match status" value="1"/>
</dbReference>
<dbReference type="Pfam" id="PF00069">
    <property type="entry name" value="Pkinase"/>
    <property type="match status" value="2"/>
</dbReference>
<dbReference type="Pfam" id="PF00433">
    <property type="entry name" value="Pkinase_C"/>
    <property type="match status" value="1"/>
</dbReference>
<dbReference type="PIRSF" id="PIRSF000606">
    <property type="entry name" value="Ribsml_S6_kin_2"/>
    <property type="match status" value="1"/>
</dbReference>
<dbReference type="SMART" id="SM00133">
    <property type="entry name" value="S_TK_X"/>
    <property type="match status" value="1"/>
</dbReference>
<dbReference type="SMART" id="SM00220">
    <property type="entry name" value="S_TKc"/>
    <property type="match status" value="2"/>
</dbReference>
<dbReference type="SUPFAM" id="SSF56112">
    <property type="entry name" value="Protein kinase-like (PK-like)"/>
    <property type="match status" value="2"/>
</dbReference>
<dbReference type="PROSITE" id="PS51285">
    <property type="entry name" value="AGC_KINASE_CTER"/>
    <property type="match status" value="1"/>
</dbReference>
<dbReference type="PROSITE" id="PS00107">
    <property type="entry name" value="PROTEIN_KINASE_ATP"/>
    <property type="match status" value="2"/>
</dbReference>
<dbReference type="PROSITE" id="PS50011">
    <property type="entry name" value="PROTEIN_KINASE_DOM"/>
    <property type="match status" value="2"/>
</dbReference>
<dbReference type="PROSITE" id="PS00108">
    <property type="entry name" value="PROTEIN_KINASE_ST"/>
    <property type="match status" value="2"/>
</dbReference>